<accession>A8FSH6</accession>
<name>Y1188_SHESH</name>
<reference key="1">
    <citation type="submission" date="2007-08" db="EMBL/GenBank/DDBJ databases">
        <title>Complete sequence of Shewanella sediminis HAW-EB3.</title>
        <authorList>
            <consortium name="US DOE Joint Genome Institute"/>
            <person name="Copeland A."/>
            <person name="Lucas S."/>
            <person name="Lapidus A."/>
            <person name="Barry K."/>
            <person name="Glavina del Rio T."/>
            <person name="Dalin E."/>
            <person name="Tice H."/>
            <person name="Pitluck S."/>
            <person name="Chertkov O."/>
            <person name="Brettin T."/>
            <person name="Bruce D."/>
            <person name="Detter J.C."/>
            <person name="Han C."/>
            <person name="Schmutz J."/>
            <person name="Larimer F."/>
            <person name="Land M."/>
            <person name="Hauser L."/>
            <person name="Kyrpides N."/>
            <person name="Kim E."/>
            <person name="Zhao J.-S."/>
            <person name="Richardson P."/>
        </authorList>
    </citation>
    <scope>NUCLEOTIDE SEQUENCE [LARGE SCALE GENOMIC DNA]</scope>
    <source>
        <strain>HAW-EB3</strain>
    </source>
</reference>
<organism>
    <name type="scientific">Shewanella sediminis (strain HAW-EB3)</name>
    <dbReference type="NCBI Taxonomy" id="425104"/>
    <lineage>
        <taxon>Bacteria</taxon>
        <taxon>Pseudomonadati</taxon>
        <taxon>Pseudomonadota</taxon>
        <taxon>Gammaproteobacteria</taxon>
        <taxon>Alteromonadales</taxon>
        <taxon>Shewanellaceae</taxon>
        <taxon>Shewanella</taxon>
    </lineage>
</organism>
<keyword id="KW-1185">Reference proteome</keyword>
<protein>
    <recommendedName>
        <fullName evidence="1">UPF0246 protein Ssed_1188</fullName>
    </recommendedName>
</protein>
<gene>
    <name type="ordered locus">Ssed_1188</name>
</gene>
<feature type="chain" id="PRO_1000082780" description="UPF0246 protein Ssed_1188">
    <location>
        <begin position="1"/>
        <end position="257"/>
    </location>
</feature>
<evidence type="ECO:0000255" key="1">
    <source>
        <dbReference type="HAMAP-Rule" id="MF_00652"/>
    </source>
</evidence>
<proteinExistence type="inferred from homology"/>
<comment type="similarity">
    <text evidence="1">Belongs to the UPF0246 family.</text>
</comment>
<sequence>MLVLVSPAKTLDYENKAGTIEHTLPKLVQHSEQLIEECRKLAPSDIASLMKVSDKIAGLNAARFTSWSRDFSTDNAKQALYAFRGDVYTGLDADTLSQQSIERAQKHLRILSGLYGLLRPLDLMQPYRLEMGTRLANIKGTNLYQFWGDVITDEVNLALSEQGDQIVVNLASNEYFKAVKPKSLNGSLITPIFKDRKNGQYKVISFFAKRARGMMVRYILDNNIKTFSGLTEFDAAGYYYCEAESTAQAPVFKREEQ</sequence>
<dbReference type="EMBL" id="CP000821">
    <property type="protein sequence ID" value="ABV35799.1"/>
    <property type="molecule type" value="Genomic_DNA"/>
</dbReference>
<dbReference type="RefSeq" id="WP_012141535.1">
    <property type="nucleotide sequence ID" value="NC_009831.1"/>
</dbReference>
<dbReference type="SMR" id="A8FSH6"/>
<dbReference type="STRING" id="425104.Ssed_1188"/>
<dbReference type="KEGG" id="sse:Ssed_1188"/>
<dbReference type="eggNOG" id="COG3022">
    <property type="taxonomic scope" value="Bacteria"/>
</dbReference>
<dbReference type="HOGENOM" id="CLU_061989_0_0_6"/>
<dbReference type="OrthoDB" id="9777133at2"/>
<dbReference type="Proteomes" id="UP000002015">
    <property type="component" value="Chromosome"/>
</dbReference>
<dbReference type="GO" id="GO:0005829">
    <property type="term" value="C:cytosol"/>
    <property type="evidence" value="ECO:0007669"/>
    <property type="project" value="TreeGrafter"/>
</dbReference>
<dbReference type="GO" id="GO:0033194">
    <property type="term" value="P:response to hydroperoxide"/>
    <property type="evidence" value="ECO:0007669"/>
    <property type="project" value="TreeGrafter"/>
</dbReference>
<dbReference type="HAMAP" id="MF_00652">
    <property type="entry name" value="UPF0246"/>
    <property type="match status" value="1"/>
</dbReference>
<dbReference type="InterPro" id="IPR005583">
    <property type="entry name" value="YaaA"/>
</dbReference>
<dbReference type="NCBIfam" id="NF002541">
    <property type="entry name" value="PRK02101.1-1"/>
    <property type="match status" value="1"/>
</dbReference>
<dbReference type="NCBIfam" id="NF002542">
    <property type="entry name" value="PRK02101.1-3"/>
    <property type="match status" value="1"/>
</dbReference>
<dbReference type="PANTHER" id="PTHR30283:SF4">
    <property type="entry name" value="PEROXIDE STRESS RESISTANCE PROTEIN YAAA"/>
    <property type="match status" value="1"/>
</dbReference>
<dbReference type="PANTHER" id="PTHR30283">
    <property type="entry name" value="PEROXIDE STRESS RESPONSE PROTEIN YAAA"/>
    <property type="match status" value="1"/>
</dbReference>
<dbReference type="Pfam" id="PF03883">
    <property type="entry name" value="H2O2_YaaD"/>
    <property type="match status" value="1"/>
</dbReference>